<proteinExistence type="evidence at transcript level"/>
<accession>O46379</accession>
<dbReference type="EMBL" id="AF020292">
    <property type="protein sequence ID" value="AAC39517.1"/>
    <property type="molecule type" value="mRNA"/>
</dbReference>
<dbReference type="SMR" id="O46379"/>
<dbReference type="STRING" id="9986.ENSOCUP00000004852"/>
<dbReference type="PaxDb" id="9986-ENSOCUP00000004852"/>
<dbReference type="eggNOG" id="KOG0619">
    <property type="taxonomic scope" value="Eukaryota"/>
</dbReference>
<dbReference type="InParanoid" id="O46379"/>
<dbReference type="Proteomes" id="UP000001811">
    <property type="component" value="Unplaced"/>
</dbReference>
<dbReference type="GO" id="GO:0005615">
    <property type="term" value="C:extracellular space"/>
    <property type="evidence" value="ECO:0007669"/>
    <property type="project" value="TreeGrafter"/>
</dbReference>
<dbReference type="GO" id="GO:0005518">
    <property type="term" value="F:collagen binding"/>
    <property type="evidence" value="ECO:0007669"/>
    <property type="project" value="TreeGrafter"/>
</dbReference>
<dbReference type="FunFam" id="3.80.10.10:FF:000151">
    <property type="entry name" value="Lumican"/>
    <property type="match status" value="1"/>
</dbReference>
<dbReference type="Gene3D" id="3.80.10.10">
    <property type="entry name" value="Ribonuclease Inhibitor"/>
    <property type="match status" value="2"/>
</dbReference>
<dbReference type="InterPro" id="IPR001611">
    <property type="entry name" value="Leu-rich_rpt"/>
</dbReference>
<dbReference type="InterPro" id="IPR003591">
    <property type="entry name" value="Leu-rich_rpt_typical-subtyp"/>
</dbReference>
<dbReference type="InterPro" id="IPR032675">
    <property type="entry name" value="LRR_dom_sf"/>
</dbReference>
<dbReference type="InterPro" id="IPR050333">
    <property type="entry name" value="SLRP"/>
</dbReference>
<dbReference type="PANTHER" id="PTHR45712">
    <property type="entry name" value="AGAP008170-PA"/>
    <property type="match status" value="1"/>
</dbReference>
<dbReference type="PANTHER" id="PTHR45712:SF6">
    <property type="entry name" value="LUMICAN"/>
    <property type="match status" value="1"/>
</dbReference>
<dbReference type="Pfam" id="PF00560">
    <property type="entry name" value="LRR_1"/>
    <property type="match status" value="2"/>
</dbReference>
<dbReference type="Pfam" id="PF13855">
    <property type="entry name" value="LRR_8"/>
    <property type="match status" value="1"/>
</dbReference>
<dbReference type="PRINTS" id="PR00019">
    <property type="entry name" value="LEURICHRPT"/>
</dbReference>
<dbReference type="SMART" id="SM00364">
    <property type="entry name" value="LRR_BAC"/>
    <property type="match status" value="4"/>
</dbReference>
<dbReference type="SMART" id="SM00365">
    <property type="entry name" value="LRR_SD22"/>
    <property type="match status" value="3"/>
</dbReference>
<dbReference type="SMART" id="SM00369">
    <property type="entry name" value="LRR_TYP"/>
    <property type="match status" value="5"/>
</dbReference>
<dbReference type="SUPFAM" id="SSF52058">
    <property type="entry name" value="L domain-like"/>
    <property type="match status" value="1"/>
</dbReference>
<dbReference type="PROSITE" id="PS51450">
    <property type="entry name" value="LRR"/>
    <property type="match status" value="7"/>
</dbReference>
<reference key="1">
    <citation type="journal article" date="1998" name="Matrix Biol.">
        <title>Altered levels of extracellular matrix molecules mRNA in healing rabbit ligaments.</title>
        <authorList>
            <person name="Boykiw R.H."/>
            <person name="Sciore P."/>
            <person name="Reno C.R."/>
            <person name="Marchuk L."/>
            <person name="Frank C."/>
            <person name="Hart D.A."/>
        </authorList>
    </citation>
    <scope>NUCLEOTIDE SEQUENCE [MRNA]</scope>
    <source>
        <strain>New Zealand white</strain>
    </source>
</reference>
<organism>
    <name type="scientific">Oryctolagus cuniculus</name>
    <name type="common">Rabbit</name>
    <dbReference type="NCBI Taxonomy" id="9986"/>
    <lineage>
        <taxon>Eukaryota</taxon>
        <taxon>Metazoa</taxon>
        <taxon>Chordata</taxon>
        <taxon>Craniata</taxon>
        <taxon>Vertebrata</taxon>
        <taxon>Euteleostomi</taxon>
        <taxon>Mammalia</taxon>
        <taxon>Eutheria</taxon>
        <taxon>Euarchontoglires</taxon>
        <taxon>Glires</taxon>
        <taxon>Lagomorpha</taxon>
        <taxon>Leporidae</taxon>
        <taxon>Oryctolagus</taxon>
    </lineage>
</organism>
<keyword id="KW-0272">Extracellular matrix</keyword>
<keyword id="KW-0325">Glycoprotein</keyword>
<keyword id="KW-0433">Leucine-rich repeat</keyword>
<keyword id="KW-0654">Proteoglycan</keyword>
<keyword id="KW-1185">Reference proteome</keyword>
<keyword id="KW-0677">Repeat</keyword>
<keyword id="KW-0964">Secreted</keyword>
<keyword id="KW-0765">Sulfation</keyword>
<evidence type="ECO:0000250" key="1"/>
<evidence type="ECO:0000250" key="2">
    <source>
        <dbReference type="UniProtKB" id="P51884"/>
    </source>
</evidence>
<evidence type="ECO:0000250" key="3">
    <source>
        <dbReference type="UniProtKB" id="Q05443"/>
    </source>
</evidence>
<evidence type="ECO:0000305" key="4"/>
<protein>
    <recommendedName>
        <fullName>Lumican</fullName>
    </recommendedName>
    <alternativeName>
        <fullName>Keratan sulfate proteoglycan lumican</fullName>
        <shortName>KSPG lumican</shortName>
    </alternativeName>
</protein>
<feature type="chain" id="PRO_0000180085" description="Lumican">
    <location>
        <begin position="1" status="less than"/>
        <end position="192" status="greater than"/>
    </location>
</feature>
<feature type="repeat" description="LRR 1">
    <location>
        <begin position="1"/>
        <end position="23"/>
    </location>
</feature>
<feature type="repeat" description="LRR 2">
    <location>
        <begin position="26"/>
        <end position="46"/>
    </location>
</feature>
<feature type="repeat" description="LRR 3">
    <location>
        <begin position="47"/>
        <end position="68"/>
    </location>
</feature>
<feature type="repeat" description="LRR 4">
    <location>
        <begin position="69"/>
        <end position="90"/>
    </location>
</feature>
<feature type="repeat" description="LRR 5">
    <location>
        <begin position="94"/>
        <end position="114"/>
    </location>
</feature>
<feature type="repeat" description="LRR 6">
    <location>
        <begin position="115"/>
        <end position="136"/>
    </location>
</feature>
<feature type="repeat" description="LRR 7">
    <location>
        <begin position="139"/>
        <end position="162"/>
    </location>
</feature>
<feature type="repeat" description="LRR 8">
    <location>
        <begin position="164"/>
        <end position="185"/>
    </location>
</feature>
<feature type="repeat" description="LRR 9">
    <location>
        <begin position="186"/>
        <end position="192" status="greater than"/>
    </location>
</feature>
<feature type="non-terminal residue">
    <location>
        <position position="1"/>
    </location>
</feature>
<feature type="non-terminal residue">
    <location>
        <position position="192"/>
    </location>
</feature>
<gene>
    <name type="primary">LUM</name>
</gene>
<name>LUM_RABIT</name>
<comment type="subunit">
    <text evidence="1">Binds to laminin.</text>
</comment>
<comment type="subcellular location">
    <subcellularLocation>
        <location evidence="1">Secreted</location>
        <location evidence="1">Extracellular space</location>
        <location evidence="1">Extracellular matrix</location>
    </subcellularLocation>
</comment>
<comment type="PTM">
    <text evidence="2">Sulfated on tyrosine residue(s).</text>
</comment>
<comment type="PTM">
    <text evidence="3">Contains keratan sulfate.</text>
</comment>
<comment type="similarity">
    <text evidence="4">Belongs to the small leucine-rich proteoglycan (SLRP) family. SLRP class II subfamily.</text>
</comment>
<sequence length="192" mass="21833">LQWLILDHNLLENSKIKGKVFSKLKQLKKLHINHNNLTESVGPLPKSLEDLQLTHNKITKLGSFDGLLNLTFVHLQHNQLKEDAVSAAFKGLKSLEYLDLSFNQMSKLPSGLPASLLTLYLDNNKISDIPDEYFKRFNGLQYLRLSHNELADSGIPGNSFNISSLVELDLSYNKLKNIPTVNENLENYYLEV</sequence>